<sequence length="930" mass="103685">MVARNLYELLEHAALDPQDNKISVYNPGNVDQVGKSLTYADLLNTAKTNALLLPQVKGIRPDSVILLHFDNHFDAIVWFWSVIAAGYVPAISTPFTNDPEGRKKHLIHLKTLLKDPVIITQESLAKAFSIVDGLNTHTIESIQKFDAPHILNGVHATAKQHDDLAVLMLTSGSSGNAKAVCLRHGQLLQSIAGKSTHHGISKSDVFLNWIGLDHVANLTETHLQAMQHAAPQFHVQASDLLVDPLILLKLIDRHRITVTFAPNFFIASVRVALEHPEPFLHGKEPDLTCFRIMISGGEANVVEASQALTTLFQKYGVSSEFIRPGFGMTETCAGSIYSRECPSYDVSNKWEFASLGTCIPGLQMRISSDSGEILSMNQVGNLELFGPILFHEYYNNPVATAEAFTADHWFRTGDHASIDGNGRLSLAGRAKETIIVNGVKYFPHELETAIEDALIPGLTPSYTVVFPHRPKNSQTEAVCVVYLPSYEPEDVLARVGVADAISKISIMQTGVKPFQIIPLDKTLLPKSSLGKLSRAKTRAAFEAGKYEVFQKLNDDAIHAYRATQNQAPSNETEATILHVFADLFEIPEADIGVNTSLFEMGVSSIEIIKFKQRIQTELKLKVEIPVITMLTNPTIRGLAGTLETLMGPQVYSPKVTLQAEGKKTPLWLVHPGVGEVLVFLNLAKFIVDRPIHALRARGFDGEPFFEDIAEVVSTYHQAIKEEQPEGPYAIAGYSYGSMLAFEVSKVLEANGDKVEFLGVFNLPPHIKFRMRQLDWVEVLLNLSYFLDLMTEEEAHRISPEMHELSNSLGNDKVLDYILERAPRERMHEMALDRKKMSTWADLAYRMQAIAQDYDPSGRVRNMDIFYAIPLVAVAKSKKEWVDNHLVKWRGFVDEEPHWHEVDGAHYTMLGPDNIHTFQKTLRASLEERGL</sequence>
<keyword id="KW-0596">Phosphopantetheine</keyword>
<keyword id="KW-0597">Phosphoprotein</keyword>
<keyword id="KW-0808">Transferase</keyword>
<organism>
    <name type="scientific">Ascocoryne sarcoides</name>
    <name type="common">Purple jellydisc fungus</name>
    <name type="synonym">Bulgaria sarcoides</name>
    <dbReference type="NCBI Taxonomy" id="139061"/>
    <lineage>
        <taxon>Eukaryota</taxon>
        <taxon>Fungi</taxon>
        <taxon>Dikarya</taxon>
        <taxon>Ascomycota</taxon>
        <taxon>Pezizomycotina</taxon>
        <taxon>Leotiomycetes</taxon>
        <taxon>Helotiales</taxon>
        <taxon>Gelatinodiscaceae</taxon>
        <taxon>Ascocoryne</taxon>
    </lineage>
</organism>
<accession>P9WES4</accession>
<evidence type="ECO:0000255" key="1"/>
<evidence type="ECO:0000255" key="2">
    <source>
        <dbReference type="PROSITE-ProRule" id="PRU00258"/>
    </source>
</evidence>
<evidence type="ECO:0000269" key="3">
    <source>
    </source>
</evidence>
<evidence type="ECO:0000303" key="4">
    <source>
    </source>
</evidence>
<evidence type="ECO:0000305" key="5"/>
<evidence type="ECO:0000305" key="6">
    <source>
    </source>
</evidence>
<feature type="chain" id="PRO_0000456589" description="Nonribosomal peptide synthetase acyN">
    <location>
        <begin position="1"/>
        <end position="930"/>
    </location>
</feature>
<feature type="domain" description="Carrier" evidence="2 6">
    <location>
        <begin position="567"/>
        <end position="646"/>
    </location>
</feature>
<feature type="region of interest" description="Adenylation (A) domain" evidence="1 6">
    <location>
        <begin position="15"/>
        <end position="436"/>
    </location>
</feature>
<feature type="region of interest" description="Thioesterase (TE) domain" evidence="1 6">
    <location>
        <begin position="665"/>
        <end position="914"/>
    </location>
</feature>
<feature type="modified residue" description="O-(pantetheine 4'-phosphoryl)serine" evidence="2">
    <location>
        <position position="604"/>
    </location>
</feature>
<protein>
    <recommendedName>
        <fullName evidence="4">Nonribosomal peptide synthetase acyN</fullName>
        <ecNumber evidence="3">2.3.1.-</ecNumber>
    </recommendedName>
    <alternativeName>
        <fullName evidence="4">Polyporic acid synthetase acyN</fullName>
    </alternativeName>
</protein>
<name>ACYN_ASCSA</name>
<reference key="1">
    <citation type="journal article" date="2012" name="PLoS Genet.">
        <title>Genomic analysis of the hydrocarbon-producing, cellulolytic, endophytic fungus Ascocoryne sarcoides.</title>
        <authorList>
            <person name="Gianoulis T.A."/>
            <person name="Griffin M.A."/>
            <person name="Spakowicz D.J."/>
            <person name="Dunican B.F."/>
            <person name="Alpha C.J."/>
            <person name="Sboner A."/>
            <person name="Sismour A.M."/>
            <person name="Kodira C."/>
            <person name="Egholm M."/>
            <person name="Church G.M."/>
            <person name="Gerstein M.B."/>
            <person name="Strobel S.A."/>
        </authorList>
    </citation>
    <scope>NUCLEOTIDE SEQUENCE [LARGE SCALE GENOMIC DNA]</scope>
    <source>
        <strain>NRRL 50072</strain>
    </source>
</reference>
<reference key="2">
    <citation type="journal article" date="2022" name="Fungal Biol. Biotechnol.">
        <title>Characterisation of ascocorynin biosynthesis in the purple jellydisc fungus Ascocoryne sarcoides.</title>
        <authorList>
            <person name="Wieder C."/>
            <person name="Peres da Silva R."/>
            <person name="Witts J."/>
            <person name="Jaeger C.M."/>
            <person name="Geib E."/>
            <person name="Brock M."/>
        </authorList>
    </citation>
    <scope>FUNCTION</scope>
    <scope>DOMAIN</scope>
    <scope>CATALYTIC ACTIVITY</scope>
    <scope>ACTIVITY REGULATION</scope>
    <scope>PATHWAY</scope>
</reference>
<proteinExistence type="evidence at protein level"/>
<comment type="function">
    <text evidence="3">Nonribosomal peptide synthetase that mediates the biosynthesis of polyporic acid via the condensation of 2 phenylpyruvate units (PubMed:35477441). Polyporic acid is further hydroxylaed by the cytochrome P450 monooxygenase MO6277 into less toxic ascocorynin (PubMed:35477441).</text>
</comment>
<comment type="catalytic activity">
    <reaction evidence="3">
        <text>2 3-phenylpyruvate + 2 ATP = polyporic acid + 2 AMP + 2 diphosphate + H(+)</text>
        <dbReference type="Rhea" id="RHEA:72883"/>
        <dbReference type="ChEBI" id="CHEBI:15378"/>
        <dbReference type="ChEBI" id="CHEBI:18005"/>
        <dbReference type="ChEBI" id="CHEBI:30616"/>
        <dbReference type="ChEBI" id="CHEBI:33019"/>
        <dbReference type="ChEBI" id="CHEBI:192516"/>
        <dbReference type="ChEBI" id="CHEBI:456215"/>
    </reaction>
    <physiologicalReaction direction="left-to-right" evidence="3">
        <dbReference type="Rhea" id="RHEA:72884"/>
    </physiologicalReaction>
</comment>
<comment type="activity regulation">
    <text evidence="3">Hydroxyphenylpyruvate acts more like a competitive inhibitor rather than a substrate.</text>
</comment>
<comment type="pathway">
    <text evidence="3">Secondary metabolite biosynthesis.</text>
</comment>
<comment type="domain">
    <text evidence="6">AcyN has an A-T-TE domain architecture. The adenylation (A) domain recognizes and activates the phenylpyruvate substrates, and loads them onto the thiolation (T) domain. The thioesterase (TE) domain shares the missing condensation (C) domain function, and is responsible for condensation and final product release.</text>
</comment>
<comment type="similarity">
    <text evidence="5">Belongs to the NRP synthetase family.</text>
</comment>
<dbReference type="EC" id="2.3.1.-" evidence="3"/>
<dbReference type="EMBL" id="KB205944">
    <property type="status" value="NOT_ANNOTATED_CDS"/>
    <property type="molecule type" value="Genomic_DNA"/>
</dbReference>
<dbReference type="SMR" id="P9WES4"/>
<dbReference type="GO" id="GO:0031177">
    <property type="term" value="F:phosphopantetheine binding"/>
    <property type="evidence" value="ECO:0007669"/>
    <property type="project" value="InterPro"/>
</dbReference>
<dbReference type="GO" id="GO:0016740">
    <property type="term" value="F:transferase activity"/>
    <property type="evidence" value="ECO:0007669"/>
    <property type="project" value="UniProtKB-KW"/>
</dbReference>
<dbReference type="GO" id="GO:0031957">
    <property type="term" value="F:very long-chain fatty acid-CoA ligase activity"/>
    <property type="evidence" value="ECO:0007669"/>
    <property type="project" value="TreeGrafter"/>
</dbReference>
<dbReference type="GO" id="GO:0006633">
    <property type="term" value="P:fatty acid biosynthetic process"/>
    <property type="evidence" value="ECO:0007669"/>
    <property type="project" value="TreeGrafter"/>
</dbReference>
<dbReference type="Gene3D" id="3.30.300.30">
    <property type="match status" value="1"/>
</dbReference>
<dbReference type="Gene3D" id="1.10.1200.10">
    <property type="entry name" value="ACP-like"/>
    <property type="match status" value="1"/>
</dbReference>
<dbReference type="Gene3D" id="3.40.50.1820">
    <property type="entry name" value="alpha/beta hydrolase"/>
    <property type="match status" value="1"/>
</dbReference>
<dbReference type="Gene3D" id="3.40.50.12780">
    <property type="entry name" value="N-terminal domain of ligase-like"/>
    <property type="match status" value="1"/>
</dbReference>
<dbReference type="InterPro" id="IPR029058">
    <property type="entry name" value="AB_hydrolase_fold"/>
</dbReference>
<dbReference type="InterPro" id="IPR036736">
    <property type="entry name" value="ACP-like_sf"/>
</dbReference>
<dbReference type="InterPro" id="IPR045851">
    <property type="entry name" value="AMP-bd_C_sf"/>
</dbReference>
<dbReference type="InterPro" id="IPR020845">
    <property type="entry name" value="AMP-binding_CS"/>
</dbReference>
<dbReference type="InterPro" id="IPR000873">
    <property type="entry name" value="AMP-dep_synth/lig_dom"/>
</dbReference>
<dbReference type="InterPro" id="IPR042099">
    <property type="entry name" value="ANL_N_sf"/>
</dbReference>
<dbReference type="InterPro" id="IPR020806">
    <property type="entry name" value="PKS_PP-bd"/>
</dbReference>
<dbReference type="InterPro" id="IPR009081">
    <property type="entry name" value="PP-bd_ACP"/>
</dbReference>
<dbReference type="InterPro" id="IPR001031">
    <property type="entry name" value="Thioesterase"/>
</dbReference>
<dbReference type="PANTHER" id="PTHR24096">
    <property type="entry name" value="LONG-CHAIN-FATTY-ACID--COA LIGASE"/>
    <property type="match status" value="1"/>
</dbReference>
<dbReference type="PANTHER" id="PTHR24096:SF267">
    <property type="entry name" value="MALONATE--COA LIGASE ACSF3, MITOCHONDRIAL"/>
    <property type="match status" value="1"/>
</dbReference>
<dbReference type="Pfam" id="PF00501">
    <property type="entry name" value="AMP-binding"/>
    <property type="match status" value="1"/>
</dbReference>
<dbReference type="Pfam" id="PF00550">
    <property type="entry name" value="PP-binding"/>
    <property type="match status" value="1"/>
</dbReference>
<dbReference type="Pfam" id="PF00975">
    <property type="entry name" value="Thioesterase"/>
    <property type="match status" value="1"/>
</dbReference>
<dbReference type="SMART" id="SM00823">
    <property type="entry name" value="PKS_PP"/>
    <property type="match status" value="1"/>
</dbReference>
<dbReference type="SUPFAM" id="SSF56801">
    <property type="entry name" value="Acetyl-CoA synthetase-like"/>
    <property type="match status" value="1"/>
</dbReference>
<dbReference type="SUPFAM" id="SSF47336">
    <property type="entry name" value="ACP-like"/>
    <property type="match status" value="1"/>
</dbReference>
<dbReference type="SUPFAM" id="SSF53474">
    <property type="entry name" value="alpha/beta-Hydrolases"/>
    <property type="match status" value="1"/>
</dbReference>
<dbReference type="PROSITE" id="PS00455">
    <property type="entry name" value="AMP_BINDING"/>
    <property type="match status" value="1"/>
</dbReference>
<dbReference type="PROSITE" id="PS50075">
    <property type="entry name" value="CARRIER"/>
    <property type="match status" value="1"/>
</dbReference>